<feature type="chain" id="PRO_0000383519" description="Probable 4-deoxy-4-formamido-L-arabinose-phosphoundecaprenol deformylase ArnD">
    <location>
        <begin position="1"/>
        <end position="295"/>
    </location>
</feature>
<feature type="domain" description="NodB homology" evidence="1">
    <location>
        <begin position="2"/>
        <end position="260"/>
    </location>
</feature>
<sequence>MIQAGLRIDVDTFRGTRDGVPRLLELLDEAGLKATFFFSVGPDNMGRHLWRLARPAFFWKMLRSRAASLYGWDILLAGTAWPGKPIGRELGPLMRRTQAAGHEVGLHAWDHHAWQTHAGVWSVQQLGEQIRRGSDCLADILGQPVRCSAAAGWRADGRVVEAKQPFGFRYNSDCRGRGAFRPRLADGSPGIPQVPVNLPTFDEVVGPGLPREAYNDFILERFAAGRDNVYTIHAEVEGLLLAPAFRELLRRAERRGIRFRPLGELLPDDPRSLPLAELVRGRLAGREGWLGVRQP</sequence>
<organism>
    <name type="scientific">Pseudomonas aeruginosa (strain ATCC 15692 / DSM 22644 / CIP 104116 / JCM 14847 / LMG 12228 / 1C / PRS 101 / PAO1)</name>
    <dbReference type="NCBI Taxonomy" id="208964"/>
    <lineage>
        <taxon>Bacteria</taxon>
        <taxon>Pseudomonadati</taxon>
        <taxon>Pseudomonadota</taxon>
        <taxon>Gammaproteobacteria</taxon>
        <taxon>Pseudomonadales</taxon>
        <taxon>Pseudomonadaceae</taxon>
        <taxon>Pseudomonas</taxon>
    </lineage>
</organism>
<comment type="function">
    <text evidence="1">Catalyzes the deformylation of 4-deoxy-4-formamido-L-arabinose-phosphoundecaprenol to 4-amino-4-deoxy-L-arabinose-phosphoundecaprenol. The modified arabinose is attached to lipid A and is required for resistance to polymyxin and cationic antimicrobial peptides.</text>
</comment>
<comment type="catalytic activity">
    <reaction evidence="1">
        <text>4-deoxy-4-formamido-alpha-L-arabinopyranosyl di-trans,octa-cis-undecaprenyl phosphate + H2O = 4-amino-4-deoxy-alpha-L-arabinopyranosyl di-trans,octa-cis-undecaprenyl phosphate + formate</text>
        <dbReference type="Rhea" id="RHEA:27734"/>
        <dbReference type="ChEBI" id="CHEBI:15377"/>
        <dbReference type="ChEBI" id="CHEBI:15740"/>
        <dbReference type="ChEBI" id="CHEBI:58909"/>
        <dbReference type="ChEBI" id="CHEBI:60463"/>
        <dbReference type="EC" id="3.5.1.n3"/>
    </reaction>
</comment>
<comment type="pathway">
    <text evidence="1">Glycolipid biosynthesis; 4-amino-4-deoxy-alpha-L-arabinose undecaprenyl phosphate biosynthesis; 4-amino-4-deoxy-alpha-L-arabinose undecaprenyl phosphate from UDP-4-deoxy-4-formamido-beta-L-arabinose and undecaprenyl phosphate: step 2/2.</text>
</comment>
<comment type="pathway">
    <text evidence="1">Bacterial outer membrane biogenesis; lipopolysaccharide biosynthesis.</text>
</comment>
<comment type="similarity">
    <text evidence="1">Belongs to the polysaccharide deacetylase family. ArnD deformylase subfamily.</text>
</comment>
<proteinExistence type="inferred from homology"/>
<evidence type="ECO:0000255" key="1">
    <source>
        <dbReference type="HAMAP-Rule" id="MF_01870"/>
    </source>
</evidence>
<accession>Q9HY62</accession>
<dbReference type="EC" id="3.5.1.n3" evidence="1"/>
<dbReference type="EMBL" id="AE004091">
    <property type="protein sequence ID" value="AAG06943.1"/>
    <property type="molecule type" value="Genomic_DNA"/>
</dbReference>
<dbReference type="PIR" id="F83201">
    <property type="entry name" value="F83201"/>
</dbReference>
<dbReference type="RefSeq" id="NP_252245.1">
    <property type="nucleotide sequence ID" value="NC_002516.2"/>
</dbReference>
<dbReference type="RefSeq" id="WP_003112878.1">
    <property type="nucleotide sequence ID" value="NZ_QZGE01000001.1"/>
</dbReference>
<dbReference type="SMR" id="Q9HY62"/>
<dbReference type="FunCoup" id="Q9HY62">
    <property type="interactions" value="82"/>
</dbReference>
<dbReference type="STRING" id="208964.PA3555"/>
<dbReference type="PaxDb" id="208964-PA3555"/>
<dbReference type="GeneID" id="879121"/>
<dbReference type="KEGG" id="pae:PA3555"/>
<dbReference type="PATRIC" id="fig|208964.12.peg.3720"/>
<dbReference type="PseudoCAP" id="PA3555"/>
<dbReference type="HOGENOM" id="CLU_084199_0_0_6"/>
<dbReference type="InParanoid" id="Q9HY62"/>
<dbReference type="OrthoDB" id="5589314at2"/>
<dbReference type="PhylomeDB" id="Q9HY62"/>
<dbReference type="BioCyc" id="PAER208964:G1FZ6-3623-MONOMER"/>
<dbReference type="UniPathway" id="UPA00030"/>
<dbReference type="UniPathway" id="UPA00036">
    <property type="reaction ID" value="UER00496"/>
</dbReference>
<dbReference type="Proteomes" id="UP000002438">
    <property type="component" value="Chromosome"/>
</dbReference>
<dbReference type="GO" id="GO:0016020">
    <property type="term" value="C:membrane"/>
    <property type="evidence" value="ECO:0007669"/>
    <property type="project" value="GOC"/>
</dbReference>
<dbReference type="GO" id="GO:0016811">
    <property type="term" value="F:hydrolase activity, acting on carbon-nitrogen (but not peptide) bonds, in linear amides"/>
    <property type="evidence" value="ECO:0007669"/>
    <property type="project" value="UniProtKB-UniRule"/>
</dbReference>
<dbReference type="GO" id="GO:0036108">
    <property type="term" value="P:4-amino-4-deoxy-alpha-L-arabinopyranosyl undecaprenyl phosphate biosynthetic process"/>
    <property type="evidence" value="ECO:0007669"/>
    <property type="project" value="UniProtKB-UniRule"/>
</dbReference>
<dbReference type="GO" id="GO:0009245">
    <property type="term" value="P:lipid A biosynthetic process"/>
    <property type="evidence" value="ECO:0007669"/>
    <property type="project" value="UniProtKB-UniRule"/>
</dbReference>
<dbReference type="GO" id="GO:0009103">
    <property type="term" value="P:lipopolysaccharide biosynthetic process"/>
    <property type="evidence" value="ECO:0007669"/>
    <property type="project" value="UniProtKB-UniRule"/>
</dbReference>
<dbReference type="GO" id="GO:0046677">
    <property type="term" value="P:response to antibiotic"/>
    <property type="evidence" value="ECO:0007669"/>
    <property type="project" value="UniProtKB-KW"/>
</dbReference>
<dbReference type="Gene3D" id="3.20.20.370">
    <property type="entry name" value="Glycoside hydrolase/deacetylase"/>
    <property type="match status" value="1"/>
</dbReference>
<dbReference type="HAMAP" id="MF_01870">
    <property type="entry name" value="ArnD"/>
    <property type="match status" value="1"/>
</dbReference>
<dbReference type="InterPro" id="IPR023557">
    <property type="entry name" value="ArnD"/>
</dbReference>
<dbReference type="InterPro" id="IPR011330">
    <property type="entry name" value="Glyco_hydro/deAcase_b/a-brl"/>
</dbReference>
<dbReference type="InterPro" id="IPR002509">
    <property type="entry name" value="NODB_dom"/>
</dbReference>
<dbReference type="InterPro" id="IPR050248">
    <property type="entry name" value="Polysacc_deacetylase_ArnD"/>
</dbReference>
<dbReference type="NCBIfam" id="NF011923">
    <property type="entry name" value="PRK15394.1"/>
    <property type="match status" value="1"/>
</dbReference>
<dbReference type="PANTHER" id="PTHR10587:SF137">
    <property type="entry name" value="4-DEOXY-4-FORMAMIDO-L-ARABINOSE-PHOSPHOUNDECAPRENOL DEFORMYLASE ARND-RELATED"/>
    <property type="match status" value="1"/>
</dbReference>
<dbReference type="PANTHER" id="PTHR10587">
    <property type="entry name" value="GLYCOSYL TRANSFERASE-RELATED"/>
    <property type="match status" value="1"/>
</dbReference>
<dbReference type="Pfam" id="PF01522">
    <property type="entry name" value="Polysacc_deac_1"/>
    <property type="match status" value="1"/>
</dbReference>
<dbReference type="SUPFAM" id="SSF88713">
    <property type="entry name" value="Glycoside hydrolase/deacetylase"/>
    <property type="match status" value="1"/>
</dbReference>
<dbReference type="PROSITE" id="PS51677">
    <property type="entry name" value="NODB"/>
    <property type="match status" value="1"/>
</dbReference>
<reference key="1">
    <citation type="journal article" date="2000" name="Nature">
        <title>Complete genome sequence of Pseudomonas aeruginosa PAO1, an opportunistic pathogen.</title>
        <authorList>
            <person name="Stover C.K."/>
            <person name="Pham X.-Q.T."/>
            <person name="Erwin A.L."/>
            <person name="Mizoguchi S.D."/>
            <person name="Warrener P."/>
            <person name="Hickey M.J."/>
            <person name="Brinkman F.S.L."/>
            <person name="Hufnagle W.O."/>
            <person name="Kowalik D.J."/>
            <person name="Lagrou M."/>
            <person name="Garber R.L."/>
            <person name="Goltry L."/>
            <person name="Tolentino E."/>
            <person name="Westbrock-Wadman S."/>
            <person name="Yuan Y."/>
            <person name="Brody L.L."/>
            <person name="Coulter S.N."/>
            <person name="Folger K.R."/>
            <person name="Kas A."/>
            <person name="Larbig K."/>
            <person name="Lim R.M."/>
            <person name="Smith K.A."/>
            <person name="Spencer D.H."/>
            <person name="Wong G.K.-S."/>
            <person name="Wu Z."/>
            <person name="Paulsen I.T."/>
            <person name="Reizer J."/>
            <person name="Saier M.H. Jr."/>
            <person name="Hancock R.E.W."/>
            <person name="Lory S."/>
            <person name="Olson M.V."/>
        </authorList>
    </citation>
    <scope>NUCLEOTIDE SEQUENCE [LARGE SCALE GENOMIC DNA]</scope>
    <source>
        <strain>ATCC 15692 / DSM 22644 / CIP 104116 / JCM 14847 / LMG 12228 / 1C / PRS 101 / PAO1</strain>
    </source>
</reference>
<name>ARND_PSEAE</name>
<gene>
    <name evidence="1" type="primary">arnD</name>
    <name type="ordered locus">PA3555</name>
</gene>
<protein>
    <recommendedName>
        <fullName evidence="1">Probable 4-deoxy-4-formamido-L-arabinose-phosphoundecaprenol deformylase ArnD</fullName>
        <ecNumber evidence="1">3.5.1.n3</ecNumber>
    </recommendedName>
</protein>
<keyword id="KW-0046">Antibiotic resistance</keyword>
<keyword id="KW-0378">Hydrolase</keyword>
<keyword id="KW-0441">Lipid A biosynthesis</keyword>
<keyword id="KW-0444">Lipid biosynthesis</keyword>
<keyword id="KW-0443">Lipid metabolism</keyword>
<keyword id="KW-0448">Lipopolysaccharide biosynthesis</keyword>
<keyword id="KW-1185">Reference proteome</keyword>